<dbReference type="EMBL" id="CP001037">
    <property type="protein sequence ID" value="ACC78881.1"/>
    <property type="molecule type" value="Genomic_DNA"/>
</dbReference>
<dbReference type="RefSeq" id="WP_012406910.1">
    <property type="nucleotide sequence ID" value="NC_010628.1"/>
</dbReference>
<dbReference type="SMR" id="B2J3F1"/>
<dbReference type="STRING" id="63737.Npun_F0080"/>
<dbReference type="EnsemblBacteria" id="ACC78881">
    <property type="protein sequence ID" value="ACC78881"/>
    <property type="gene ID" value="Npun_F0080"/>
</dbReference>
<dbReference type="KEGG" id="npu:Npun_F0080"/>
<dbReference type="eggNOG" id="COG0781">
    <property type="taxonomic scope" value="Bacteria"/>
</dbReference>
<dbReference type="HOGENOM" id="CLU_087843_0_0_3"/>
<dbReference type="OrthoDB" id="3528057at2"/>
<dbReference type="PhylomeDB" id="B2J3F1"/>
<dbReference type="Proteomes" id="UP000001191">
    <property type="component" value="Chromosome"/>
</dbReference>
<dbReference type="GO" id="GO:0005829">
    <property type="term" value="C:cytosol"/>
    <property type="evidence" value="ECO:0007669"/>
    <property type="project" value="TreeGrafter"/>
</dbReference>
<dbReference type="GO" id="GO:0003723">
    <property type="term" value="F:RNA binding"/>
    <property type="evidence" value="ECO:0007669"/>
    <property type="project" value="UniProtKB-UniRule"/>
</dbReference>
<dbReference type="GO" id="GO:0006353">
    <property type="term" value="P:DNA-templated transcription termination"/>
    <property type="evidence" value="ECO:0007669"/>
    <property type="project" value="UniProtKB-UniRule"/>
</dbReference>
<dbReference type="GO" id="GO:0031564">
    <property type="term" value="P:transcription antitermination"/>
    <property type="evidence" value="ECO:0007669"/>
    <property type="project" value="UniProtKB-KW"/>
</dbReference>
<dbReference type="CDD" id="cd00619">
    <property type="entry name" value="Terminator_NusB"/>
    <property type="match status" value="1"/>
</dbReference>
<dbReference type="Gene3D" id="1.10.940.10">
    <property type="entry name" value="NusB-like"/>
    <property type="match status" value="1"/>
</dbReference>
<dbReference type="HAMAP" id="MF_00073">
    <property type="entry name" value="NusB"/>
    <property type="match status" value="1"/>
</dbReference>
<dbReference type="InterPro" id="IPR035926">
    <property type="entry name" value="NusB-like_sf"/>
</dbReference>
<dbReference type="InterPro" id="IPR011605">
    <property type="entry name" value="NusB_fam"/>
</dbReference>
<dbReference type="InterPro" id="IPR006027">
    <property type="entry name" value="NusB_RsmB_TIM44"/>
</dbReference>
<dbReference type="NCBIfam" id="TIGR01951">
    <property type="entry name" value="nusB"/>
    <property type="match status" value="1"/>
</dbReference>
<dbReference type="PANTHER" id="PTHR11078:SF3">
    <property type="entry name" value="ANTITERMINATION NUSB DOMAIN-CONTAINING PROTEIN"/>
    <property type="match status" value="1"/>
</dbReference>
<dbReference type="PANTHER" id="PTHR11078">
    <property type="entry name" value="N UTILIZATION SUBSTANCE PROTEIN B-RELATED"/>
    <property type="match status" value="1"/>
</dbReference>
<dbReference type="Pfam" id="PF01029">
    <property type="entry name" value="NusB"/>
    <property type="match status" value="1"/>
</dbReference>
<dbReference type="SUPFAM" id="SSF48013">
    <property type="entry name" value="NusB-like"/>
    <property type="match status" value="1"/>
</dbReference>
<proteinExistence type="inferred from homology"/>
<organism>
    <name type="scientific">Nostoc punctiforme (strain ATCC 29133 / PCC 73102)</name>
    <dbReference type="NCBI Taxonomy" id="63737"/>
    <lineage>
        <taxon>Bacteria</taxon>
        <taxon>Bacillati</taxon>
        <taxon>Cyanobacteriota</taxon>
        <taxon>Cyanophyceae</taxon>
        <taxon>Nostocales</taxon>
        <taxon>Nostocaceae</taxon>
        <taxon>Nostoc</taxon>
    </lineage>
</organism>
<feature type="chain" id="PRO_1000092569" description="Transcription antitermination protein NusB">
    <location>
        <begin position="1"/>
        <end position="213"/>
    </location>
</feature>
<reference key="1">
    <citation type="journal article" date="2013" name="Plant Physiol.">
        <title>A Nostoc punctiforme Sugar Transporter Necessary to Establish a Cyanobacterium-Plant Symbiosis.</title>
        <authorList>
            <person name="Ekman M."/>
            <person name="Picossi S."/>
            <person name="Campbell E.L."/>
            <person name="Meeks J.C."/>
            <person name="Flores E."/>
        </authorList>
    </citation>
    <scope>NUCLEOTIDE SEQUENCE [LARGE SCALE GENOMIC DNA]</scope>
    <source>
        <strain>ATCC 29133 / PCC 73102</strain>
    </source>
</reference>
<sequence>MQPRKPQQIARELALLSLSQLPVNPKKLDTLLDDQLVSKLVLGAVRTLTSEVQDTLNNAAGELQRSNDRLLSSQTRASDLNSARTMLQEAIACTQTAINQLGTAVDFPELIQLANQDKGVRNYAKELVITVNENRHIIDELLSTALVDWQVTRLAQLDRDILQIAVAEMKFLGVPDSIAINEAVELAKRYSGDDGHRFINGVLRRVTEQKKTA</sequence>
<keyword id="KW-1185">Reference proteome</keyword>
<keyword id="KW-0694">RNA-binding</keyword>
<keyword id="KW-0804">Transcription</keyword>
<keyword id="KW-0889">Transcription antitermination</keyword>
<keyword id="KW-0805">Transcription regulation</keyword>
<evidence type="ECO:0000255" key="1">
    <source>
        <dbReference type="HAMAP-Rule" id="MF_00073"/>
    </source>
</evidence>
<gene>
    <name evidence="1" type="primary">nusB</name>
    <name type="ordered locus">Npun_F0080</name>
</gene>
<comment type="function">
    <text evidence="1">Involved in transcription antitermination. Required for transcription of ribosomal RNA (rRNA) genes. Binds specifically to the boxA antiterminator sequence of the ribosomal RNA (rrn) operons.</text>
</comment>
<comment type="similarity">
    <text evidence="1">Belongs to the NusB family.</text>
</comment>
<name>NUSB_NOSP7</name>
<accession>B2J3F1</accession>
<protein>
    <recommendedName>
        <fullName evidence="1">Transcription antitermination protein NusB</fullName>
    </recommendedName>
    <alternativeName>
        <fullName evidence="1">Antitermination factor NusB</fullName>
    </alternativeName>
</protein>